<gene>
    <name evidence="2" type="primary">TCP17</name>
</gene>
<accession>O96876</accession>
<reference evidence="3" key="1">
    <citation type="journal article" date="1998" name="Gene">
        <title>A new member of YER057c family in Trypanosoma cruzi is adjacent to an ABC-transporter.</title>
        <authorList>
            <person name="Robello C."/>
            <person name="Dallagiovanna B."/>
            <person name="Engel J.C."/>
            <person name="Gamarro F."/>
            <person name="Castanys S."/>
        </authorList>
    </citation>
    <scope>NUCLEOTIDE SEQUENCE [MRNA]</scope>
    <scope>SUBCELLULAR LOCATION</scope>
    <scope>DEVELOPMENTAL STAGE</scope>
    <source>
        <strain evidence="2">Y</strain>
    </source>
</reference>
<proteinExistence type="evidence at protein level"/>
<name>TCP17_TRYCR</name>
<organism evidence="3">
    <name type="scientific">Trypanosoma cruzi</name>
    <dbReference type="NCBI Taxonomy" id="5693"/>
    <lineage>
        <taxon>Eukaryota</taxon>
        <taxon>Discoba</taxon>
        <taxon>Euglenozoa</taxon>
        <taxon>Kinetoplastea</taxon>
        <taxon>Metakinetoplastina</taxon>
        <taxon>Trypanosomatida</taxon>
        <taxon>Trypanosomatidae</taxon>
        <taxon>Trypanosoma</taxon>
        <taxon>Schizotrypanum</taxon>
    </lineage>
</organism>
<keyword id="KW-0963">Cytoplasm</keyword>
<feature type="chain" id="PRO_0000432859" description="Protein TCP17">
    <location>
        <begin position="1"/>
        <end position="160"/>
    </location>
</feature>
<sequence>MSVVASGRVAANLQRLGIKLPAAAAPATNYVSYVCSGMQLHVSGQLPKNDVGGCMTGQLGASLTVTEGQAAARACALQVVSQMQAALGDLDRVKRVVKLNVFVNSSPSFTEQSYVANGASDLILSVFGEEVGRHARCAVGVAQLPFGAAVEVDALVELNN</sequence>
<comment type="subcellular location">
    <subcellularLocation>
        <location evidence="1">Cytoplasm</location>
    </subcellularLocation>
</comment>
<comment type="developmental stage">
    <text evidence="1">Expressed in epimastigotes (at protein level). Expressed in epimastigote, trypomastigote and amastigote stages.</text>
</comment>
<dbReference type="EMBL" id="U67906">
    <property type="protein sequence ID" value="AAC77873.1"/>
    <property type="molecule type" value="mRNA"/>
</dbReference>
<dbReference type="SMR" id="O96876"/>
<dbReference type="VEuPathDB" id="TriTrypDB:BCY84_22591"/>
<dbReference type="VEuPathDB" id="TriTrypDB:C3747_288g59"/>
<dbReference type="VEuPathDB" id="TriTrypDB:C3747_360g16"/>
<dbReference type="VEuPathDB" id="TriTrypDB:C4B63_241g12"/>
<dbReference type="VEuPathDB" id="TriTrypDB:Tc_MARK_6298"/>
<dbReference type="VEuPathDB" id="TriTrypDB:TcBrA4_0139160"/>
<dbReference type="VEuPathDB" id="TriTrypDB:TcCL_Unassigned02275"/>
<dbReference type="VEuPathDB" id="TriTrypDB:TcCLB.505647.40"/>
<dbReference type="VEuPathDB" id="TriTrypDB:TcG_10334"/>
<dbReference type="VEuPathDB" id="TriTrypDB:TcYC6_0031690"/>
<dbReference type="GO" id="GO:0005737">
    <property type="term" value="C:cytoplasm"/>
    <property type="evidence" value="ECO:0007669"/>
    <property type="project" value="UniProtKB-SubCell"/>
</dbReference>
<dbReference type="CDD" id="cd02199">
    <property type="entry name" value="YjgF_YER057c_UK114_like_1"/>
    <property type="match status" value="1"/>
</dbReference>
<dbReference type="Gene3D" id="3.30.1330.40">
    <property type="entry name" value="RutC-like"/>
    <property type="match status" value="1"/>
</dbReference>
<dbReference type="InterPro" id="IPR013813">
    <property type="entry name" value="Endoribo_LPSP/chorism_mut-like"/>
</dbReference>
<dbReference type="InterPro" id="IPR035959">
    <property type="entry name" value="RutC-like_sf"/>
</dbReference>
<dbReference type="PANTHER" id="PTHR43760:SF1">
    <property type="entry name" value="ENDORIBONUCLEASE L-PSP_CHORISMATE MUTASE-LIKE DOMAIN-CONTAINING PROTEIN"/>
    <property type="match status" value="1"/>
</dbReference>
<dbReference type="PANTHER" id="PTHR43760">
    <property type="entry name" value="ENDORIBONUCLEASE-RELATED"/>
    <property type="match status" value="1"/>
</dbReference>
<dbReference type="Pfam" id="PF14588">
    <property type="entry name" value="YjgF_endoribonc"/>
    <property type="match status" value="1"/>
</dbReference>
<dbReference type="SUPFAM" id="SSF55298">
    <property type="entry name" value="YjgF-like"/>
    <property type="match status" value="1"/>
</dbReference>
<evidence type="ECO:0000269" key="1">
    <source>
    </source>
</evidence>
<evidence type="ECO:0000303" key="2">
    <source>
    </source>
</evidence>
<evidence type="ECO:0000312" key="3">
    <source>
        <dbReference type="EMBL" id="AAC77873.1"/>
    </source>
</evidence>
<protein>
    <recommendedName>
        <fullName evidence="2">Protein TCP17</fullName>
    </recommendedName>
</protein>